<protein>
    <recommendedName>
        <fullName>Probable cutinase 1</fullName>
        <ecNumber evidence="5 6">3.1.1.74</ecNumber>
    </recommendedName>
    <alternativeName>
        <fullName>Cutin hydrolase 1</fullName>
    </alternativeName>
</protein>
<organism>
    <name type="scientific">Aspergillus fumigatus (strain CBS 144.89 / FGSC A1163 / CEA10)</name>
    <name type="common">Neosartorya fumigata</name>
    <dbReference type="NCBI Taxonomy" id="451804"/>
    <lineage>
        <taxon>Eukaryota</taxon>
        <taxon>Fungi</taxon>
        <taxon>Dikarya</taxon>
        <taxon>Ascomycota</taxon>
        <taxon>Pezizomycotina</taxon>
        <taxon>Eurotiomycetes</taxon>
        <taxon>Eurotiomycetidae</taxon>
        <taxon>Eurotiales</taxon>
        <taxon>Aspergillaceae</taxon>
        <taxon>Aspergillus</taxon>
        <taxon>Aspergillus subgen. Fumigati</taxon>
    </lineage>
</organism>
<reference key="1">
    <citation type="journal article" date="2008" name="PLoS Genet.">
        <title>Genomic islands in the pathogenic filamentous fungus Aspergillus fumigatus.</title>
        <authorList>
            <person name="Fedorova N.D."/>
            <person name="Khaldi N."/>
            <person name="Joardar V.S."/>
            <person name="Maiti R."/>
            <person name="Amedeo P."/>
            <person name="Anderson M.J."/>
            <person name="Crabtree J."/>
            <person name="Silva J.C."/>
            <person name="Badger J.H."/>
            <person name="Albarraq A."/>
            <person name="Angiuoli S."/>
            <person name="Bussey H."/>
            <person name="Bowyer P."/>
            <person name="Cotty P.J."/>
            <person name="Dyer P.S."/>
            <person name="Egan A."/>
            <person name="Galens K."/>
            <person name="Fraser-Liggett C.M."/>
            <person name="Haas B.J."/>
            <person name="Inman J.M."/>
            <person name="Kent R."/>
            <person name="Lemieux S."/>
            <person name="Malavazi I."/>
            <person name="Orvis J."/>
            <person name="Roemer T."/>
            <person name="Ronning C.M."/>
            <person name="Sundaram J.P."/>
            <person name="Sutton G."/>
            <person name="Turner G."/>
            <person name="Venter J.C."/>
            <person name="White O.R."/>
            <person name="Whitty B.R."/>
            <person name="Youngman P."/>
            <person name="Wolfe K.H."/>
            <person name="Goldman G.H."/>
            <person name="Wortman J.R."/>
            <person name="Jiang B."/>
            <person name="Denning D.W."/>
            <person name="Nierman W.C."/>
        </authorList>
    </citation>
    <scope>NUCLEOTIDE SEQUENCE [LARGE SCALE GENOMIC DNA]</scope>
    <source>
        <strain>CBS 144.89 / FGSC A1163 / CEA10</strain>
    </source>
</reference>
<evidence type="ECO:0000250" key="1">
    <source>
        <dbReference type="UniProtKB" id="P00590"/>
    </source>
</evidence>
<evidence type="ECO:0000250" key="2">
    <source>
        <dbReference type="UniProtKB" id="P11373"/>
    </source>
</evidence>
<evidence type="ECO:0000250" key="3">
    <source>
        <dbReference type="UniProtKB" id="P52956"/>
    </source>
</evidence>
<evidence type="ECO:0000255" key="4"/>
<evidence type="ECO:0000255" key="5">
    <source>
        <dbReference type="PROSITE-ProRule" id="PRU10108"/>
    </source>
</evidence>
<evidence type="ECO:0000255" key="6">
    <source>
        <dbReference type="PROSITE-ProRule" id="PRU10109"/>
    </source>
</evidence>
<evidence type="ECO:0000305" key="7"/>
<accession>B0XRY3</accession>
<comment type="function">
    <text evidence="1">Catalyzes the hydrolysis of complex carboxylic polyesters found in the cell wall of plants (By similarity). Degrades cutin, a macromolecule that forms the structure of the plant cuticle (By similarity).</text>
</comment>
<comment type="catalytic activity">
    <reaction evidence="5 6">
        <text>cutin + H2O = cutin monomers.</text>
        <dbReference type="EC" id="3.1.1.74"/>
    </reaction>
</comment>
<comment type="subcellular location">
    <subcellularLocation>
        <location evidence="2">Secreted</location>
    </subcellularLocation>
</comment>
<comment type="similarity">
    <text evidence="7">Belongs to the cutinase family.</text>
</comment>
<name>CUTI1_ASPFC</name>
<keyword id="KW-1015">Disulfide bond</keyword>
<keyword id="KW-0378">Hydrolase</keyword>
<keyword id="KW-0964">Secreted</keyword>
<keyword id="KW-0719">Serine esterase</keyword>
<keyword id="KW-0732">Signal</keyword>
<gene>
    <name type="ORF">AFUB_025250</name>
</gene>
<dbReference type="EC" id="3.1.1.74" evidence="5 6"/>
<dbReference type="EMBL" id="DS499595">
    <property type="protein sequence ID" value="EDP54469.1"/>
    <property type="molecule type" value="Genomic_DNA"/>
</dbReference>
<dbReference type="SMR" id="B0XRY3"/>
<dbReference type="ESTHER" id="aspfu-q4x1n0">
    <property type="family name" value="Cutinase"/>
</dbReference>
<dbReference type="EnsemblFungi" id="EDP54469">
    <property type="protein sequence ID" value="EDP54469"/>
    <property type="gene ID" value="AFUB_025250"/>
</dbReference>
<dbReference type="VEuPathDB" id="FungiDB:AFUB_025250"/>
<dbReference type="HOGENOM" id="CLU_040058_2_0_1"/>
<dbReference type="OrthoDB" id="119092at5052"/>
<dbReference type="PhylomeDB" id="B0XRY3"/>
<dbReference type="Proteomes" id="UP000001699">
    <property type="component" value="Unassembled WGS sequence"/>
</dbReference>
<dbReference type="GO" id="GO:0005576">
    <property type="term" value="C:extracellular region"/>
    <property type="evidence" value="ECO:0007669"/>
    <property type="project" value="UniProtKB-SubCell"/>
</dbReference>
<dbReference type="GO" id="GO:0050525">
    <property type="term" value="F:cutinase activity"/>
    <property type="evidence" value="ECO:0000250"/>
    <property type="project" value="UniProtKB"/>
</dbReference>
<dbReference type="GO" id="GO:0016052">
    <property type="term" value="P:carbohydrate catabolic process"/>
    <property type="evidence" value="ECO:0007669"/>
    <property type="project" value="TreeGrafter"/>
</dbReference>
<dbReference type="FunFam" id="3.40.50.1820:FF:000235">
    <property type="entry name" value="Cutinase 1"/>
    <property type="match status" value="1"/>
</dbReference>
<dbReference type="Gene3D" id="3.40.50.1820">
    <property type="entry name" value="alpha/beta hydrolase"/>
    <property type="match status" value="1"/>
</dbReference>
<dbReference type="InterPro" id="IPR029058">
    <property type="entry name" value="AB_hydrolase_fold"/>
</dbReference>
<dbReference type="InterPro" id="IPR000675">
    <property type="entry name" value="Cutinase/axe"/>
</dbReference>
<dbReference type="InterPro" id="IPR043580">
    <property type="entry name" value="CUTINASE_1"/>
</dbReference>
<dbReference type="InterPro" id="IPR043579">
    <property type="entry name" value="CUTINASE_2"/>
</dbReference>
<dbReference type="InterPro" id="IPR011150">
    <property type="entry name" value="Cutinase_monf"/>
</dbReference>
<dbReference type="PANTHER" id="PTHR48250:SF3">
    <property type="entry name" value="CUTINASE 1-RELATED"/>
    <property type="match status" value="1"/>
</dbReference>
<dbReference type="PANTHER" id="PTHR48250">
    <property type="entry name" value="CUTINASE 2-RELATED"/>
    <property type="match status" value="1"/>
</dbReference>
<dbReference type="Pfam" id="PF01083">
    <property type="entry name" value="Cutinase"/>
    <property type="match status" value="1"/>
</dbReference>
<dbReference type="PRINTS" id="PR00129">
    <property type="entry name" value="CUTINASE"/>
</dbReference>
<dbReference type="SMART" id="SM01110">
    <property type="entry name" value="Cutinase"/>
    <property type="match status" value="1"/>
</dbReference>
<dbReference type="SUPFAM" id="SSF53474">
    <property type="entry name" value="alpha/beta-Hydrolases"/>
    <property type="match status" value="1"/>
</dbReference>
<dbReference type="PROSITE" id="PS00155">
    <property type="entry name" value="CUTINASE_1"/>
    <property type="match status" value="1"/>
</dbReference>
<dbReference type="PROSITE" id="PS00931">
    <property type="entry name" value="CUTINASE_2"/>
    <property type="match status" value="1"/>
</dbReference>
<sequence length="211" mass="21856">MKFALLSLAAMAVASPVAIDVRQTAITGDELRTGPCEPITFIFARGSTEPGLLGITTGPGVCNALKLSRPGQVACQGVGPAYIADLASNFLPQGTSQVAIDEAAGLFKLAASKCPDTKIVAGGYSQGAAVMHGAIRNLPSNVQNMIKGVVLFGDTRNKQDGGRIPNFPTDRTKIYCAFGDLVCDGTLIITPAHLSYGDDVPSATSFLLSKV</sequence>
<proteinExistence type="inferred from homology"/>
<feature type="signal peptide" evidence="4">
    <location>
        <begin position="1"/>
        <end position="18"/>
    </location>
</feature>
<feature type="chain" id="PRO_0000395251" description="Probable cutinase 1">
    <location>
        <begin position="19"/>
        <end position="211"/>
    </location>
</feature>
<feature type="active site" description="Nucleophile" evidence="1">
    <location>
        <position position="125"/>
    </location>
</feature>
<feature type="active site" evidence="1">
    <location>
        <position position="180"/>
    </location>
</feature>
<feature type="active site" description="Proton donor/acceptor" evidence="1">
    <location>
        <position position="193"/>
    </location>
</feature>
<feature type="site" description="Transition state stabilizer" evidence="1">
    <location>
        <position position="47"/>
    </location>
</feature>
<feature type="site" description="Transition state stabilizer" evidence="1">
    <location>
        <position position="126"/>
    </location>
</feature>
<feature type="disulfide bond" evidence="3">
    <location>
        <begin position="36"/>
        <end position="114"/>
    </location>
</feature>
<feature type="disulfide bond" evidence="3">
    <location>
        <begin position="62"/>
        <end position="75"/>
    </location>
</feature>
<feature type="disulfide bond" evidence="3">
    <location>
        <begin position="176"/>
        <end position="183"/>
    </location>
</feature>